<feature type="chain" id="PRO_0000161059" description="Histidine ammonia-lyase">
    <location>
        <begin position="1"/>
        <end position="657"/>
    </location>
</feature>
<feature type="modified residue" description="2,3-didehydroalanine (Ser)" evidence="3">
    <location>
        <position position="254"/>
    </location>
</feature>
<feature type="modified residue" description="Phosphothreonine" evidence="6 7">
    <location>
        <position position="396"/>
    </location>
</feature>
<feature type="modified residue" description="Phosphoserine" evidence="2">
    <location>
        <position position="635"/>
    </location>
</feature>
<feature type="modified residue" description="Phosphothreonine" evidence="7">
    <location>
        <position position="637"/>
    </location>
</feature>
<feature type="modified residue" description="Phosphoserine" evidence="6">
    <location>
        <position position="648"/>
    </location>
</feature>
<feature type="cross-link" description="5-imidazolinone (Ala-Gly)" evidence="1">
    <location>
        <begin position="253"/>
        <end position="255"/>
    </location>
</feature>
<feature type="sequence variant" description="In His; reduced stability." evidence="4">
    <original>R</original>
    <variation>Q</variation>
    <location>
        <position position="322"/>
    </location>
</feature>
<keyword id="KW-0225">Disease variant</keyword>
<keyword id="KW-0369">Histidine metabolism</keyword>
<keyword id="KW-0456">Lyase</keyword>
<keyword id="KW-0597">Phosphoprotein</keyword>
<keyword id="KW-1185">Reference proteome</keyword>
<accession>P35492</accession>
<proteinExistence type="evidence at protein level"/>
<protein>
    <recommendedName>
        <fullName>Histidine ammonia-lyase</fullName>
        <shortName>Histidase</shortName>
        <ecNumber>4.3.1.3</ecNumber>
    </recommendedName>
</protein>
<evidence type="ECO:0000250" key="1"/>
<evidence type="ECO:0000250" key="2">
    <source>
        <dbReference type="UniProtKB" id="P21213"/>
    </source>
</evidence>
<evidence type="ECO:0000255" key="3">
    <source>
        <dbReference type="PROSITE-ProRule" id="PRU10122"/>
    </source>
</evidence>
<evidence type="ECO:0000269" key="4">
    <source>
    </source>
</evidence>
<evidence type="ECO:0000305" key="5"/>
<evidence type="ECO:0007744" key="6">
    <source>
    </source>
</evidence>
<evidence type="ECO:0007744" key="7">
    <source>
    </source>
</evidence>
<gene>
    <name type="primary">Hal</name>
    <name type="synonym">Hsd</name>
    <name type="synonym">Huth</name>
</gene>
<name>HUTH_MOUSE</name>
<dbReference type="EC" id="4.3.1.3"/>
<dbReference type="EMBL" id="L07645">
    <property type="protein sequence ID" value="AAA37777.1"/>
    <property type="molecule type" value="mRNA"/>
</dbReference>
<dbReference type="EMBL" id="AK014518">
    <property type="protein sequence ID" value="BAB29407.1"/>
    <property type="molecule type" value="mRNA"/>
</dbReference>
<dbReference type="EMBL" id="BC057637">
    <property type="protein sequence ID" value="AAH57637.1"/>
    <property type="molecule type" value="mRNA"/>
</dbReference>
<dbReference type="CCDS" id="CCDS36036.1"/>
<dbReference type="PIR" id="A46128">
    <property type="entry name" value="A46128"/>
</dbReference>
<dbReference type="RefSeq" id="NP_034531.1">
    <property type="nucleotide sequence ID" value="NM_010401.4"/>
</dbReference>
<dbReference type="SMR" id="P35492"/>
<dbReference type="BioGRID" id="200203">
    <property type="interactions" value="12"/>
</dbReference>
<dbReference type="FunCoup" id="P35492">
    <property type="interactions" value="41"/>
</dbReference>
<dbReference type="STRING" id="10090.ENSMUSP00000123336"/>
<dbReference type="iPTMnet" id="P35492"/>
<dbReference type="PhosphoSitePlus" id="P35492"/>
<dbReference type="SwissPalm" id="P35492"/>
<dbReference type="jPOST" id="P35492"/>
<dbReference type="PaxDb" id="10090-ENSMUSP00000123336"/>
<dbReference type="ProteomicsDB" id="273324"/>
<dbReference type="Pumba" id="P35492"/>
<dbReference type="Antibodypedia" id="30149">
    <property type="antibodies" value="147 antibodies from 26 providers"/>
</dbReference>
<dbReference type="DNASU" id="15109"/>
<dbReference type="Ensembl" id="ENSMUST00000129421.8">
    <property type="protein sequence ID" value="ENSMUSP00000123336.2"/>
    <property type="gene ID" value="ENSMUSG00000020017.15"/>
</dbReference>
<dbReference type="GeneID" id="15109"/>
<dbReference type="KEGG" id="mmu:15109"/>
<dbReference type="UCSC" id="uc007gus.1">
    <property type="organism name" value="mouse"/>
</dbReference>
<dbReference type="AGR" id="MGI:96010"/>
<dbReference type="CTD" id="3034"/>
<dbReference type="MGI" id="MGI:96010">
    <property type="gene designation" value="Hal"/>
</dbReference>
<dbReference type="VEuPathDB" id="HostDB:ENSMUSG00000020017"/>
<dbReference type="eggNOG" id="KOG0222">
    <property type="taxonomic scope" value="Eukaryota"/>
</dbReference>
<dbReference type="GeneTree" id="ENSGT00390000009047"/>
<dbReference type="HOGENOM" id="CLU_014801_4_0_1"/>
<dbReference type="InParanoid" id="P35492"/>
<dbReference type="OMA" id="YSLRCMP"/>
<dbReference type="OrthoDB" id="10051290at2759"/>
<dbReference type="PhylomeDB" id="P35492"/>
<dbReference type="TreeFam" id="TF313824"/>
<dbReference type="Reactome" id="R-MMU-70921">
    <property type="pathway name" value="Histidine catabolism"/>
</dbReference>
<dbReference type="UniPathway" id="UPA00379">
    <property type="reaction ID" value="UER00549"/>
</dbReference>
<dbReference type="BioGRID-ORCS" id="15109">
    <property type="hits" value="2 hits in 78 CRISPR screens"/>
</dbReference>
<dbReference type="PRO" id="PR:P35492"/>
<dbReference type="Proteomes" id="UP000000589">
    <property type="component" value="Chromosome 10"/>
</dbReference>
<dbReference type="RNAct" id="P35492">
    <property type="molecule type" value="protein"/>
</dbReference>
<dbReference type="Bgee" id="ENSMUSG00000020017">
    <property type="expression patterns" value="Expressed in skin of external ear and 79 other cell types or tissues"/>
</dbReference>
<dbReference type="ExpressionAtlas" id="P35492">
    <property type="expression patterns" value="baseline and differential"/>
</dbReference>
<dbReference type="GO" id="GO:0005737">
    <property type="term" value="C:cytoplasm"/>
    <property type="evidence" value="ECO:0007669"/>
    <property type="project" value="InterPro"/>
</dbReference>
<dbReference type="GO" id="GO:0004397">
    <property type="term" value="F:histidine ammonia-lyase activity"/>
    <property type="evidence" value="ECO:0000314"/>
    <property type="project" value="MGI"/>
</dbReference>
<dbReference type="GO" id="GO:0006548">
    <property type="term" value="P:L-histidine catabolic process"/>
    <property type="evidence" value="ECO:0000314"/>
    <property type="project" value="MGI"/>
</dbReference>
<dbReference type="GO" id="GO:0019556">
    <property type="term" value="P:L-histidine catabolic process to glutamate and formamide"/>
    <property type="evidence" value="ECO:0007669"/>
    <property type="project" value="UniProtKB-UniPathway"/>
</dbReference>
<dbReference type="GO" id="GO:0019557">
    <property type="term" value="P:L-histidine catabolic process to glutamate and formate"/>
    <property type="evidence" value="ECO:0007669"/>
    <property type="project" value="UniProtKB-UniPathway"/>
</dbReference>
<dbReference type="CDD" id="cd00332">
    <property type="entry name" value="PAL-HAL"/>
    <property type="match status" value="1"/>
</dbReference>
<dbReference type="FunFam" id="1.10.275.10:FF:000007">
    <property type="entry name" value="Histidine ammonia-lyase"/>
    <property type="match status" value="1"/>
</dbReference>
<dbReference type="FunFam" id="1.20.200.10:FF:000003">
    <property type="entry name" value="Histidine ammonia-lyase"/>
    <property type="match status" value="1"/>
</dbReference>
<dbReference type="FunFam" id="3.10.20.90:FF:000111">
    <property type="entry name" value="Histidine ammonia-lyase"/>
    <property type="match status" value="1"/>
</dbReference>
<dbReference type="Gene3D" id="1.20.200.10">
    <property type="entry name" value="Fumarase/aspartase (Central domain)"/>
    <property type="match status" value="1"/>
</dbReference>
<dbReference type="Gene3D" id="1.10.275.10">
    <property type="entry name" value="Fumarase/aspartase (N-terminal domain)"/>
    <property type="match status" value="1"/>
</dbReference>
<dbReference type="Gene3D" id="3.10.20.90">
    <property type="entry name" value="Phosphatidylinositol 3-kinase Catalytic Subunit, Chain A, domain 1"/>
    <property type="match status" value="1"/>
</dbReference>
<dbReference type="InterPro" id="IPR001106">
    <property type="entry name" value="Aromatic_Lyase"/>
</dbReference>
<dbReference type="InterPro" id="IPR024083">
    <property type="entry name" value="Fumarase/histidase_N"/>
</dbReference>
<dbReference type="InterPro" id="IPR005921">
    <property type="entry name" value="HutH"/>
</dbReference>
<dbReference type="InterPro" id="IPR008948">
    <property type="entry name" value="L-Aspartase-like"/>
</dbReference>
<dbReference type="InterPro" id="IPR021922">
    <property type="entry name" value="Par3/HAL_N"/>
</dbReference>
<dbReference type="InterPro" id="IPR022313">
    <property type="entry name" value="Phe/His_NH3-lyase_AS"/>
</dbReference>
<dbReference type="NCBIfam" id="TIGR01225">
    <property type="entry name" value="hutH"/>
    <property type="match status" value="1"/>
</dbReference>
<dbReference type="NCBIfam" id="NF006871">
    <property type="entry name" value="PRK09367.1"/>
    <property type="match status" value="1"/>
</dbReference>
<dbReference type="PANTHER" id="PTHR10362">
    <property type="entry name" value="HISTIDINE AMMONIA-LYASE"/>
    <property type="match status" value="1"/>
</dbReference>
<dbReference type="Pfam" id="PF00221">
    <property type="entry name" value="Lyase_aromatic"/>
    <property type="match status" value="1"/>
</dbReference>
<dbReference type="Pfam" id="PF12053">
    <property type="entry name" value="Par3_HAL_N_term"/>
    <property type="match status" value="1"/>
</dbReference>
<dbReference type="SUPFAM" id="SSF48557">
    <property type="entry name" value="L-aspartase-like"/>
    <property type="match status" value="1"/>
</dbReference>
<dbReference type="PROSITE" id="PS00488">
    <property type="entry name" value="PAL_HISTIDASE"/>
    <property type="match status" value="1"/>
</dbReference>
<sequence length="657" mass="72258">MPRYTVHVRGEWLAVPCQDGKLTVGWLGREAVRRYMKNKPDNGGFTSVDEVQFLVHRCKGLGLLDNEDELEVALEDNEFVEVVIEGDVMSPDFIPSQPEGVFLYSKYREPEKYIALDGDSLSTEDLVNLGKGRYKIKLTSIAEKKVQQSREVIDSIIKERTVVYGITTGFGKFARTVIPANKLQELQVNLVRSHSSGVGKPLSPERCRMLLALRINVLAKGYSGISLETLKQVIEAFNASCLSYVPEKGTVGASGDLAPLSHLALGLIGEGKMWSPKSGWADAKYVLEAHGLKPIVLKPKEGLALINGTQMITSLGCEALERASAIARQADIVAALTLEVLKGTTKAFDTDIHAVRPHRGQIEVAFRFRSLLDSDHHPSEIAESHRFCDRVQDAYTLRCCPQVHGVVNDTIAFVKDIITTELNSATDNPMVFASRGETISGGNFHGEYPAKALDYLAIGVHELAAISERRIERLCNPSLSELPAFLVAEGGLNSGFMIAHCTAAALVSESKALCHPSSVDSLSTSAATEDHVSMGGWAARKALRVVEHVEQVLAIELLAACQGIEFLRPLKTTTPLEKVYDLVRSVVRPWIKDRFMAPDIEAAHRLLLDQKVWEVAAPYIEKYRMEHIPESRPLSPTAFSLESLRKNSATIPESDDL</sequence>
<reference key="1">
    <citation type="journal article" date="1993" name="Genomics">
        <title>Identification of the mutation in murine histidinemia (his) and genetic mapping of the murine histidase locus (Hal) on chromosome 10.</title>
        <authorList>
            <person name="Taylor R.G."/>
            <person name="Grieco D."/>
            <person name="Clarke G.A."/>
            <person name="McInnes R.R."/>
            <person name="Taylor B.A."/>
        </authorList>
    </citation>
    <scope>NUCLEOTIDE SEQUENCE [MRNA]</scope>
    <scope>VARIANT HIS GLN-322</scope>
    <source>
        <strain>C57BL/6J</strain>
        <tissue>Liver</tissue>
    </source>
</reference>
<reference key="2">
    <citation type="journal article" date="2005" name="Science">
        <title>The transcriptional landscape of the mammalian genome.</title>
        <authorList>
            <person name="Carninci P."/>
            <person name="Kasukawa T."/>
            <person name="Katayama S."/>
            <person name="Gough J."/>
            <person name="Frith M.C."/>
            <person name="Maeda N."/>
            <person name="Oyama R."/>
            <person name="Ravasi T."/>
            <person name="Lenhard B."/>
            <person name="Wells C."/>
            <person name="Kodzius R."/>
            <person name="Shimokawa K."/>
            <person name="Bajic V.B."/>
            <person name="Brenner S.E."/>
            <person name="Batalov S."/>
            <person name="Forrest A.R."/>
            <person name="Zavolan M."/>
            <person name="Davis M.J."/>
            <person name="Wilming L.G."/>
            <person name="Aidinis V."/>
            <person name="Allen J.E."/>
            <person name="Ambesi-Impiombato A."/>
            <person name="Apweiler R."/>
            <person name="Aturaliya R.N."/>
            <person name="Bailey T.L."/>
            <person name="Bansal M."/>
            <person name="Baxter L."/>
            <person name="Beisel K.W."/>
            <person name="Bersano T."/>
            <person name="Bono H."/>
            <person name="Chalk A.M."/>
            <person name="Chiu K.P."/>
            <person name="Choudhary V."/>
            <person name="Christoffels A."/>
            <person name="Clutterbuck D.R."/>
            <person name="Crowe M.L."/>
            <person name="Dalla E."/>
            <person name="Dalrymple B.P."/>
            <person name="de Bono B."/>
            <person name="Della Gatta G."/>
            <person name="di Bernardo D."/>
            <person name="Down T."/>
            <person name="Engstrom P."/>
            <person name="Fagiolini M."/>
            <person name="Faulkner G."/>
            <person name="Fletcher C.F."/>
            <person name="Fukushima T."/>
            <person name="Furuno M."/>
            <person name="Futaki S."/>
            <person name="Gariboldi M."/>
            <person name="Georgii-Hemming P."/>
            <person name="Gingeras T.R."/>
            <person name="Gojobori T."/>
            <person name="Green R.E."/>
            <person name="Gustincich S."/>
            <person name="Harbers M."/>
            <person name="Hayashi Y."/>
            <person name="Hensch T.K."/>
            <person name="Hirokawa N."/>
            <person name="Hill D."/>
            <person name="Huminiecki L."/>
            <person name="Iacono M."/>
            <person name="Ikeo K."/>
            <person name="Iwama A."/>
            <person name="Ishikawa T."/>
            <person name="Jakt M."/>
            <person name="Kanapin A."/>
            <person name="Katoh M."/>
            <person name="Kawasawa Y."/>
            <person name="Kelso J."/>
            <person name="Kitamura H."/>
            <person name="Kitano H."/>
            <person name="Kollias G."/>
            <person name="Krishnan S.P."/>
            <person name="Kruger A."/>
            <person name="Kummerfeld S.K."/>
            <person name="Kurochkin I.V."/>
            <person name="Lareau L.F."/>
            <person name="Lazarevic D."/>
            <person name="Lipovich L."/>
            <person name="Liu J."/>
            <person name="Liuni S."/>
            <person name="McWilliam S."/>
            <person name="Madan Babu M."/>
            <person name="Madera M."/>
            <person name="Marchionni L."/>
            <person name="Matsuda H."/>
            <person name="Matsuzawa S."/>
            <person name="Miki H."/>
            <person name="Mignone F."/>
            <person name="Miyake S."/>
            <person name="Morris K."/>
            <person name="Mottagui-Tabar S."/>
            <person name="Mulder N."/>
            <person name="Nakano N."/>
            <person name="Nakauchi H."/>
            <person name="Ng P."/>
            <person name="Nilsson R."/>
            <person name="Nishiguchi S."/>
            <person name="Nishikawa S."/>
            <person name="Nori F."/>
            <person name="Ohara O."/>
            <person name="Okazaki Y."/>
            <person name="Orlando V."/>
            <person name="Pang K.C."/>
            <person name="Pavan W.J."/>
            <person name="Pavesi G."/>
            <person name="Pesole G."/>
            <person name="Petrovsky N."/>
            <person name="Piazza S."/>
            <person name="Reed J."/>
            <person name="Reid J.F."/>
            <person name="Ring B.Z."/>
            <person name="Ringwald M."/>
            <person name="Rost B."/>
            <person name="Ruan Y."/>
            <person name="Salzberg S.L."/>
            <person name="Sandelin A."/>
            <person name="Schneider C."/>
            <person name="Schoenbach C."/>
            <person name="Sekiguchi K."/>
            <person name="Semple C.A."/>
            <person name="Seno S."/>
            <person name="Sessa L."/>
            <person name="Sheng Y."/>
            <person name="Shibata Y."/>
            <person name="Shimada H."/>
            <person name="Shimada K."/>
            <person name="Silva D."/>
            <person name="Sinclair B."/>
            <person name="Sperling S."/>
            <person name="Stupka E."/>
            <person name="Sugiura K."/>
            <person name="Sultana R."/>
            <person name="Takenaka Y."/>
            <person name="Taki K."/>
            <person name="Tammoja K."/>
            <person name="Tan S.L."/>
            <person name="Tang S."/>
            <person name="Taylor M.S."/>
            <person name="Tegner J."/>
            <person name="Teichmann S.A."/>
            <person name="Ueda H.R."/>
            <person name="van Nimwegen E."/>
            <person name="Verardo R."/>
            <person name="Wei C.L."/>
            <person name="Yagi K."/>
            <person name="Yamanishi H."/>
            <person name="Zabarovsky E."/>
            <person name="Zhu S."/>
            <person name="Zimmer A."/>
            <person name="Hide W."/>
            <person name="Bult C."/>
            <person name="Grimmond S.M."/>
            <person name="Teasdale R.D."/>
            <person name="Liu E.T."/>
            <person name="Brusic V."/>
            <person name="Quackenbush J."/>
            <person name="Wahlestedt C."/>
            <person name="Mattick J.S."/>
            <person name="Hume D.A."/>
            <person name="Kai C."/>
            <person name="Sasaki D."/>
            <person name="Tomaru Y."/>
            <person name="Fukuda S."/>
            <person name="Kanamori-Katayama M."/>
            <person name="Suzuki M."/>
            <person name="Aoki J."/>
            <person name="Arakawa T."/>
            <person name="Iida J."/>
            <person name="Imamura K."/>
            <person name="Itoh M."/>
            <person name="Kato T."/>
            <person name="Kawaji H."/>
            <person name="Kawagashira N."/>
            <person name="Kawashima T."/>
            <person name="Kojima M."/>
            <person name="Kondo S."/>
            <person name="Konno H."/>
            <person name="Nakano K."/>
            <person name="Ninomiya N."/>
            <person name="Nishio T."/>
            <person name="Okada M."/>
            <person name="Plessy C."/>
            <person name="Shibata K."/>
            <person name="Shiraki T."/>
            <person name="Suzuki S."/>
            <person name="Tagami M."/>
            <person name="Waki K."/>
            <person name="Watahiki A."/>
            <person name="Okamura-Oho Y."/>
            <person name="Suzuki H."/>
            <person name="Kawai J."/>
            <person name="Hayashizaki Y."/>
        </authorList>
    </citation>
    <scope>NUCLEOTIDE SEQUENCE [LARGE SCALE MRNA]</scope>
    <source>
        <strain>C57BL/6J</strain>
        <tissue>Skin</tissue>
    </source>
</reference>
<reference key="3">
    <citation type="journal article" date="2004" name="Genome Res.">
        <title>The status, quality, and expansion of the NIH full-length cDNA project: the Mammalian Gene Collection (MGC).</title>
        <authorList>
            <consortium name="The MGC Project Team"/>
        </authorList>
    </citation>
    <scope>NUCLEOTIDE SEQUENCE [LARGE SCALE MRNA]</scope>
    <source>
        <strain>FVB/N</strain>
        <tissue>Liver</tissue>
    </source>
</reference>
<reference key="4">
    <citation type="journal article" date="2007" name="Proc. Natl. Acad. Sci. U.S.A.">
        <title>Large-scale phosphorylation analysis of mouse liver.</title>
        <authorList>
            <person name="Villen J."/>
            <person name="Beausoleil S.A."/>
            <person name="Gerber S.A."/>
            <person name="Gygi S.P."/>
        </authorList>
    </citation>
    <scope>PHOSPHORYLATION [LARGE SCALE ANALYSIS] AT THR-396 AND SER-648</scope>
    <scope>IDENTIFICATION BY MASS SPECTROMETRY [LARGE SCALE ANALYSIS]</scope>
    <source>
        <tissue>Liver</tissue>
    </source>
</reference>
<reference key="5">
    <citation type="journal article" date="2010" name="Cell">
        <title>A tissue-specific atlas of mouse protein phosphorylation and expression.</title>
        <authorList>
            <person name="Huttlin E.L."/>
            <person name="Jedrychowski M.P."/>
            <person name="Elias J.E."/>
            <person name="Goswami T."/>
            <person name="Rad R."/>
            <person name="Beausoleil S.A."/>
            <person name="Villen J."/>
            <person name="Haas W."/>
            <person name="Sowa M.E."/>
            <person name="Gygi S.P."/>
        </authorList>
    </citation>
    <scope>PHOSPHORYLATION [LARGE SCALE ANALYSIS] AT THR-396 AND THR-637</scope>
    <scope>IDENTIFICATION BY MASS SPECTROMETRY [LARGE SCALE ANALYSIS]</scope>
    <source>
        <tissue>Liver</tissue>
        <tissue>Pancreas</tissue>
    </source>
</reference>
<organism>
    <name type="scientific">Mus musculus</name>
    <name type="common">Mouse</name>
    <dbReference type="NCBI Taxonomy" id="10090"/>
    <lineage>
        <taxon>Eukaryota</taxon>
        <taxon>Metazoa</taxon>
        <taxon>Chordata</taxon>
        <taxon>Craniata</taxon>
        <taxon>Vertebrata</taxon>
        <taxon>Euteleostomi</taxon>
        <taxon>Mammalia</taxon>
        <taxon>Eutheria</taxon>
        <taxon>Euarchontoglires</taxon>
        <taxon>Glires</taxon>
        <taxon>Rodentia</taxon>
        <taxon>Myomorpha</taxon>
        <taxon>Muroidea</taxon>
        <taxon>Muridae</taxon>
        <taxon>Murinae</taxon>
        <taxon>Mus</taxon>
        <taxon>Mus</taxon>
    </lineage>
</organism>
<comment type="catalytic activity">
    <reaction evidence="3">
        <text>L-histidine = trans-urocanate + NH4(+)</text>
        <dbReference type="Rhea" id="RHEA:21232"/>
        <dbReference type="ChEBI" id="CHEBI:17771"/>
        <dbReference type="ChEBI" id="CHEBI:28938"/>
        <dbReference type="ChEBI" id="CHEBI:57595"/>
        <dbReference type="EC" id="4.3.1.3"/>
    </reaction>
</comment>
<comment type="pathway">
    <text>Amino-acid degradation; L-histidine degradation into L-glutamate; N-formimidoyl-L-glutamate from L-histidine: step 1/3.</text>
</comment>
<comment type="PTM">
    <text evidence="1">Contains an active site 4-methylidene-imidazol-5-one (MIO), which is formed autocatalytically by cyclization and dehydration of residues Ala-Ser-Gly.</text>
</comment>
<comment type="disease">
    <text>Defects in Hal are the cause of histidinemia (His).</text>
</comment>
<comment type="similarity">
    <text evidence="5">Belongs to the PAL/histidase family.</text>
</comment>